<gene>
    <name evidence="1" type="primary">pckA</name>
    <name type="ordered locus">BAA_5034</name>
</gene>
<accession>C3PCC6</accession>
<organism>
    <name type="scientific">Bacillus anthracis (strain A0248)</name>
    <dbReference type="NCBI Taxonomy" id="592021"/>
    <lineage>
        <taxon>Bacteria</taxon>
        <taxon>Bacillati</taxon>
        <taxon>Bacillota</taxon>
        <taxon>Bacilli</taxon>
        <taxon>Bacillales</taxon>
        <taxon>Bacillaceae</taxon>
        <taxon>Bacillus</taxon>
        <taxon>Bacillus cereus group</taxon>
    </lineage>
</organism>
<name>PCKA_BACAA</name>
<sequence length="528" mass="57966">MSTVNVQIGLHELLNGSNAQIQLSVPQLVEKVLMRNEGKLTSTGAVSASTGKYTGRSPKDKFIVKEASVADKIAWGAVNQPISEEHFNKLYTKVLEYLKEKEELFVFKGFAGADRNYRLPIQVINEYAWHNLFVHQLFIRPTEEELTTHESEFTIVSAPNFKADPAVDGTNSEAFIMVSFEKRIVLIGGTEYAGEMKKSIFSIMNFLLPEQDILSMHCSANVGEEGDVALFFGLSGTGKTTLSADPNRKLIGDDEHGWSDNGVFNIEGGCYAKCVNLSHEKEPQIFDAITFGSVLENVIINDQTRIADYNDTTLTENTRAAYPMHAIDNIILPSVAGHPNTIIFLTADASGVLPPISKLSKEQAMYHFLSGYTSKLAGTERGVTSPQATFSTCFGSPFLPLDASRYAEMLGEKIEKHDAKVFLVNTGWTGGEYGVGKRMNLGYTRAMIQAALNGELAKTETAKHDIFGLEVPLHVPGVPDEVLMPEQTWADKAAYKAKAIELANEFKANFKKFDSVSEDIINLGGPIA</sequence>
<comment type="function">
    <text evidence="1">Involved in the gluconeogenesis. Catalyzes the conversion of oxaloacetate (OAA) to phosphoenolpyruvate (PEP) through direct phosphoryl transfer between the nucleoside triphosphate and OAA.</text>
</comment>
<comment type="catalytic activity">
    <reaction evidence="1">
        <text>oxaloacetate + ATP = phosphoenolpyruvate + ADP + CO2</text>
        <dbReference type="Rhea" id="RHEA:18617"/>
        <dbReference type="ChEBI" id="CHEBI:16452"/>
        <dbReference type="ChEBI" id="CHEBI:16526"/>
        <dbReference type="ChEBI" id="CHEBI:30616"/>
        <dbReference type="ChEBI" id="CHEBI:58702"/>
        <dbReference type="ChEBI" id="CHEBI:456216"/>
        <dbReference type="EC" id="4.1.1.49"/>
    </reaction>
</comment>
<comment type="cofactor">
    <cofactor evidence="1">
        <name>Mn(2+)</name>
        <dbReference type="ChEBI" id="CHEBI:29035"/>
    </cofactor>
    <text evidence="1">Binds 1 Mn(2+) ion per subunit.</text>
</comment>
<comment type="pathway">
    <text evidence="1">Carbohydrate biosynthesis; gluconeogenesis.</text>
</comment>
<comment type="subcellular location">
    <subcellularLocation>
        <location evidence="1">Cytoplasm</location>
    </subcellularLocation>
</comment>
<comment type="similarity">
    <text evidence="1">Belongs to the phosphoenolpyruvate carboxykinase (ATP) family.</text>
</comment>
<protein>
    <recommendedName>
        <fullName evidence="1">Phosphoenolpyruvate carboxykinase (ATP)</fullName>
        <shortName evidence="1">PCK</shortName>
        <shortName evidence="1">PEP carboxykinase</shortName>
        <shortName evidence="1">PEPCK</shortName>
        <ecNumber evidence="1">4.1.1.49</ecNumber>
    </recommendedName>
</protein>
<feature type="chain" id="PRO_1000192308" description="Phosphoenolpyruvate carboxykinase (ATP)">
    <location>
        <begin position="1"/>
        <end position="528"/>
    </location>
</feature>
<feature type="binding site" evidence="1">
    <location>
        <position position="56"/>
    </location>
    <ligand>
        <name>substrate</name>
    </ligand>
</feature>
<feature type="binding site" evidence="1">
    <location>
        <position position="192"/>
    </location>
    <ligand>
        <name>substrate</name>
    </ligand>
</feature>
<feature type="binding site" evidence="1">
    <location>
        <position position="198"/>
    </location>
    <ligand>
        <name>ATP</name>
        <dbReference type="ChEBI" id="CHEBI:30616"/>
    </ligand>
</feature>
<feature type="binding site" evidence="1">
    <location>
        <position position="198"/>
    </location>
    <ligand>
        <name>Mn(2+)</name>
        <dbReference type="ChEBI" id="CHEBI:29035"/>
    </ligand>
</feature>
<feature type="binding site" evidence="1">
    <location>
        <position position="198"/>
    </location>
    <ligand>
        <name>substrate</name>
    </ligand>
</feature>
<feature type="binding site" evidence="1">
    <location>
        <position position="217"/>
    </location>
    <ligand>
        <name>ATP</name>
        <dbReference type="ChEBI" id="CHEBI:30616"/>
    </ligand>
</feature>
<feature type="binding site" evidence="1">
    <location>
        <position position="217"/>
    </location>
    <ligand>
        <name>Mn(2+)</name>
        <dbReference type="ChEBI" id="CHEBI:29035"/>
    </ligand>
</feature>
<feature type="binding site" evidence="1">
    <location>
        <begin position="233"/>
        <end position="241"/>
    </location>
    <ligand>
        <name>ATP</name>
        <dbReference type="ChEBI" id="CHEBI:30616"/>
    </ligand>
</feature>
<feature type="binding site" evidence="1">
    <location>
        <position position="254"/>
    </location>
    <ligand>
        <name>Mn(2+)</name>
        <dbReference type="ChEBI" id="CHEBI:29035"/>
    </ligand>
</feature>
<feature type="binding site" evidence="1">
    <location>
        <position position="282"/>
    </location>
    <ligand>
        <name>ATP</name>
        <dbReference type="ChEBI" id="CHEBI:30616"/>
    </ligand>
</feature>
<feature type="binding site" evidence="1">
    <location>
        <position position="319"/>
    </location>
    <ligand>
        <name>ATP</name>
        <dbReference type="ChEBI" id="CHEBI:30616"/>
    </ligand>
</feature>
<feature type="binding site" evidence="1">
    <location>
        <position position="319"/>
    </location>
    <ligand>
        <name>substrate</name>
    </ligand>
</feature>
<feature type="binding site" evidence="1">
    <location>
        <position position="444"/>
    </location>
    <ligand>
        <name>ATP</name>
        <dbReference type="ChEBI" id="CHEBI:30616"/>
    </ligand>
</feature>
<reference key="1">
    <citation type="submission" date="2009-04" db="EMBL/GenBank/DDBJ databases">
        <title>Genome sequence of Bacillus anthracis A0248.</title>
        <authorList>
            <person name="Dodson R.J."/>
            <person name="Munk A.C."/>
            <person name="Bruce D."/>
            <person name="Detter C."/>
            <person name="Tapia R."/>
            <person name="Sutton G."/>
            <person name="Sims D."/>
            <person name="Brettin T."/>
        </authorList>
    </citation>
    <scope>NUCLEOTIDE SEQUENCE [LARGE SCALE GENOMIC DNA]</scope>
    <source>
        <strain>A0248</strain>
    </source>
</reference>
<dbReference type="EC" id="4.1.1.49" evidence="1"/>
<dbReference type="EMBL" id="CP001598">
    <property type="protein sequence ID" value="ACQ45957.1"/>
    <property type="molecule type" value="Genomic_DNA"/>
</dbReference>
<dbReference type="RefSeq" id="WP_000108800.1">
    <property type="nucleotide sequence ID" value="NC_012659.1"/>
</dbReference>
<dbReference type="SMR" id="C3PCC6"/>
<dbReference type="GeneID" id="45024634"/>
<dbReference type="KEGG" id="bai:BAA_5034"/>
<dbReference type="HOGENOM" id="CLU_018247_0_1_9"/>
<dbReference type="UniPathway" id="UPA00138"/>
<dbReference type="GO" id="GO:0005829">
    <property type="term" value="C:cytosol"/>
    <property type="evidence" value="ECO:0007669"/>
    <property type="project" value="TreeGrafter"/>
</dbReference>
<dbReference type="GO" id="GO:0005524">
    <property type="term" value="F:ATP binding"/>
    <property type="evidence" value="ECO:0007669"/>
    <property type="project" value="UniProtKB-UniRule"/>
</dbReference>
<dbReference type="GO" id="GO:0046872">
    <property type="term" value="F:metal ion binding"/>
    <property type="evidence" value="ECO:0007669"/>
    <property type="project" value="UniProtKB-KW"/>
</dbReference>
<dbReference type="GO" id="GO:0004612">
    <property type="term" value="F:phosphoenolpyruvate carboxykinase (ATP) activity"/>
    <property type="evidence" value="ECO:0007669"/>
    <property type="project" value="UniProtKB-UniRule"/>
</dbReference>
<dbReference type="GO" id="GO:0006094">
    <property type="term" value="P:gluconeogenesis"/>
    <property type="evidence" value="ECO:0007669"/>
    <property type="project" value="UniProtKB-UniRule"/>
</dbReference>
<dbReference type="CDD" id="cd00484">
    <property type="entry name" value="PEPCK_ATP"/>
    <property type="match status" value="1"/>
</dbReference>
<dbReference type="FunFam" id="2.170.8.10:FF:000001">
    <property type="entry name" value="Phosphoenolpyruvate carboxykinase (ATP)"/>
    <property type="match status" value="1"/>
</dbReference>
<dbReference type="FunFam" id="3.40.449.10:FF:000001">
    <property type="entry name" value="Phosphoenolpyruvate carboxykinase (ATP)"/>
    <property type="match status" value="1"/>
</dbReference>
<dbReference type="Gene3D" id="3.90.228.20">
    <property type="match status" value="1"/>
</dbReference>
<dbReference type="Gene3D" id="3.40.449.10">
    <property type="entry name" value="Phosphoenolpyruvate Carboxykinase, domain 1"/>
    <property type="match status" value="1"/>
</dbReference>
<dbReference type="Gene3D" id="2.170.8.10">
    <property type="entry name" value="Phosphoenolpyruvate Carboxykinase, domain 2"/>
    <property type="match status" value="1"/>
</dbReference>
<dbReference type="HAMAP" id="MF_00453">
    <property type="entry name" value="PEPCK_ATP"/>
    <property type="match status" value="1"/>
</dbReference>
<dbReference type="InterPro" id="IPR001272">
    <property type="entry name" value="PEP_carboxykinase_ATP"/>
</dbReference>
<dbReference type="InterPro" id="IPR013035">
    <property type="entry name" value="PEP_carboxykinase_C"/>
</dbReference>
<dbReference type="InterPro" id="IPR008210">
    <property type="entry name" value="PEP_carboxykinase_N"/>
</dbReference>
<dbReference type="InterPro" id="IPR015994">
    <property type="entry name" value="PEPCK_ATP_CS"/>
</dbReference>
<dbReference type="NCBIfam" id="TIGR00224">
    <property type="entry name" value="pckA"/>
    <property type="match status" value="1"/>
</dbReference>
<dbReference type="NCBIfam" id="NF006820">
    <property type="entry name" value="PRK09344.1-2"/>
    <property type="match status" value="1"/>
</dbReference>
<dbReference type="NCBIfam" id="NF006821">
    <property type="entry name" value="PRK09344.1-3"/>
    <property type="match status" value="1"/>
</dbReference>
<dbReference type="PANTHER" id="PTHR30031:SF0">
    <property type="entry name" value="PHOSPHOENOLPYRUVATE CARBOXYKINASE (ATP)"/>
    <property type="match status" value="1"/>
</dbReference>
<dbReference type="PANTHER" id="PTHR30031">
    <property type="entry name" value="PHOSPHOENOLPYRUVATE CARBOXYKINASE ATP"/>
    <property type="match status" value="1"/>
</dbReference>
<dbReference type="Pfam" id="PF01293">
    <property type="entry name" value="PEPCK_ATP"/>
    <property type="match status" value="1"/>
</dbReference>
<dbReference type="PIRSF" id="PIRSF006294">
    <property type="entry name" value="PEP_crbxkin"/>
    <property type="match status" value="1"/>
</dbReference>
<dbReference type="SUPFAM" id="SSF68923">
    <property type="entry name" value="PEP carboxykinase N-terminal domain"/>
    <property type="match status" value="1"/>
</dbReference>
<dbReference type="SUPFAM" id="SSF53795">
    <property type="entry name" value="PEP carboxykinase-like"/>
    <property type="match status" value="1"/>
</dbReference>
<dbReference type="PROSITE" id="PS00532">
    <property type="entry name" value="PEPCK_ATP"/>
    <property type="match status" value="1"/>
</dbReference>
<proteinExistence type="inferred from homology"/>
<keyword id="KW-0067">ATP-binding</keyword>
<keyword id="KW-0963">Cytoplasm</keyword>
<keyword id="KW-0210">Decarboxylase</keyword>
<keyword id="KW-0312">Gluconeogenesis</keyword>
<keyword id="KW-0456">Lyase</keyword>
<keyword id="KW-0464">Manganese</keyword>
<keyword id="KW-0479">Metal-binding</keyword>
<keyword id="KW-0547">Nucleotide-binding</keyword>
<evidence type="ECO:0000255" key="1">
    <source>
        <dbReference type="HAMAP-Rule" id="MF_00453"/>
    </source>
</evidence>